<organism>
    <name type="scientific">Staphylococcus aureus (strain N315)</name>
    <dbReference type="NCBI Taxonomy" id="158879"/>
    <lineage>
        <taxon>Bacteria</taxon>
        <taxon>Bacillati</taxon>
        <taxon>Bacillota</taxon>
        <taxon>Bacilli</taxon>
        <taxon>Bacillales</taxon>
        <taxon>Staphylococcaceae</taxon>
        <taxon>Staphylococcus</taxon>
    </lineage>
</organism>
<gene>
    <name evidence="1" type="primary">rpsF</name>
    <name type="ordered locus">SA0352</name>
</gene>
<accession>P99142</accession>
<accession>Q99WL2</accession>
<name>RS6_STAAN</name>
<reference key="1">
    <citation type="journal article" date="2001" name="Lancet">
        <title>Whole genome sequencing of meticillin-resistant Staphylococcus aureus.</title>
        <authorList>
            <person name="Kuroda M."/>
            <person name="Ohta T."/>
            <person name="Uchiyama I."/>
            <person name="Baba T."/>
            <person name="Yuzawa H."/>
            <person name="Kobayashi I."/>
            <person name="Cui L."/>
            <person name="Oguchi A."/>
            <person name="Aoki K."/>
            <person name="Nagai Y."/>
            <person name="Lian J.-Q."/>
            <person name="Ito T."/>
            <person name="Kanamori M."/>
            <person name="Matsumaru H."/>
            <person name="Maruyama A."/>
            <person name="Murakami H."/>
            <person name="Hosoyama A."/>
            <person name="Mizutani-Ui Y."/>
            <person name="Takahashi N.K."/>
            <person name="Sawano T."/>
            <person name="Inoue R."/>
            <person name="Kaito C."/>
            <person name="Sekimizu K."/>
            <person name="Hirakawa H."/>
            <person name="Kuhara S."/>
            <person name="Goto S."/>
            <person name="Yabuzaki J."/>
            <person name="Kanehisa M."/>
            <person name="Yamashita A."/>
            <person name="Oshima K."/>
            <person name="Furuya K."/>
            <person name="Yoshino C."/>
            <person name="Shiba T."/>
            <person name="Hattori M."/>
            <person name="Ogasawara N."/>
            <person name="Hayashi H."/>
            <person name="Hiramatsu K."/>
        </authorList>
    </citation>
    <scope>NUCLEOTIDE SEQUENCE [LARGE SCALE GENOMIC DNA]</scope>
    <source>
        <strain>N315</strain>
    </source>
</reference>
<reference key="2">
    <citation type="journal article" date="2005" name="J. Microbiol. Methods">
        <title>Correlation of proteomic and transcriptomic profiles of Staphylococcus aureus during the post-exponential phase of growth.</title>
        <authorList>
            <person name="Scherl A."/>
            <person name="Francois P."/>
            <person name="Bento M."/>
            <person name="Deshusses J.M."/>
            <person name="Charbonnier Y."/>
            <person name="Converset V."/>
            <person name="Huyghe A."/>
            <person name="Walter N."/>
            <person name="Hoogland C."/>
            <person name="Appel R.D."/>
            <person name="Sanchez J.-C."/>
            <person name="Zimmermann-Ivol C.G."/>
            <person name="Corthals G.L."/>
            <person name="Hochstrasser D.F."/>
            <person name="Schrenzel J."/>
        </authorList>
    </citation>
    <scope>IDENTIFICATION BY MASS SPECTROMETRY</scope>
    <source>
        <strain>N315</strain>
    </source>
</reference>
<reference key="3">
    <citation type="submission" date="2007-10" db="UniProtKB">
        <title>Shotgun proteomic analysis of total and membrane protein extracts of S. aureus strain N315.</title>
        <authorList>
            <person name="Vaezzadeh A.R."/>
            <person name="Deshusses J."/>
            <person name="Lescuyer P."/>
            <person name="Hochstrasser D.F."/>
        </authorList>
    </citation>
    <scope>IDENTIFICATION BY MASS SPECTROMETRY [LARGE SCALE ANALYSIS]</scope>
    <source>
        <strain>N315</strain>
    </source>
</reference>
<sequence length="98" mass="11595">MRTYEVMYIVRPNIEEDAKKALVERFNGILATEGAEVLEAKDWGKRRLAYEINDFKDGFYNIVRVKSDNNKATDEFQRLAKISDDIIRYMVIREDEDK</sequence>
<evidence type="ECO:0000255" key="1">
    <source>
        <dbReference type="HAMAP-Rule" id="MF_00360"/>
    </source>
</evidence>
<evidence type="ECO:0000305" key="2"/>
<proteinExistence type="evidence at protein level"/>
<comment type="function">
    <text evidence="1">Binds together with bS18 to 16S ribosomal RNA.</text>
</comment>
<comment type="similarity">
    <text evidence="1">Belongs to the bacterial ribosomal protein bS6 family.</text>
</comment>
<protein>
    <recommendedName>
        <fullName evidence="1">Small ribosomal subunit protein bS6</fullName>
    </recommendedName>
    <alternativeName>
        <fullName evidence="2">30S ribosomal protein S6</fullName>
    </alternativeName>
</protein>
<keyword id="KW-0687">Ribonucleoprotein</keyword>
<keyword id="KW-0689">Ribosomal protein</keyword>
<keyword id="KW-0694">RNA-binding</keyword>
<keyword id="KW-0699">rRNA-binding</keyword>
<feature type="chain" id="PRO_0000176837" description="Small ribosomal subunit protein bS6">
    <location>
        <begin position="1"/>
        <end position="98"/>
    </location>
</feature>
<dbReference type="EMBL" id="BA000018">
    <property type="protein sequence ID" value="BAB41577.1"/>
    <property type="molecule type" value="Genomic_DNA"/>
</dbReference>
<dbReference type="PIR" id="F89802">
    <property type="entry name" value="F89802"/>
</dbReference>
<dbReference type="RefSeq" id="WP_001261460.1">
    <property type="nucleotide sequence ID" value="NC_002745.2"/>
</dbReference>
<dbReference type="SMR" id="P99142"/>
<dbReference type="EnsemblBacteria" id="BAB41577">
    <property type="protein sequence ID" value="BAB41577"/>
    <property type="gene ID" value="BAB41577"/>
</dbReference>
<dbReference type="GeneID" id="98344691"/>
<dbReference type="KEGG" id="sau:SA0352"/>
<dbReference type="HOGENOM" id="CLU_113441_5_3_9"/>
<dbReference type="GO" id="GO:0005737">
    <property type="term" value="C:cytoplasm"/>
    <property type="evidence" value="ECO:0007669"/>
    <property type="project" value="UniProtKB-ARBA"/>
</dbReference>
<dbReference type="GO" id="GO:1990904">
    <property type="term" value="C:ribonucleoprotein complex"/>
    <property type="evidence" value="ECO:0007669"/>
    <property type="project" value="UniProtKB-KW"/>
</dbReference>
<dbReference type="GO" id="GO:0005840">
    <property type="term" value="C:ribosome"/>
    <property type="evidence" value="ECO:0007669"/>
    <property type="project" value="UniProtKB-KW"/>
</dbReference>
<dbReference type="GO" id="GO:0070181">
    <property type="term" value="F:small ribosomal subunit rRNA binding"/>
    <property type="evidence" value="ECO:0007669"/>
    <property type="project" value="TreeGrafter"/>
</dbReference>
<dbReference type="GO" id="GO:0003735">
    <property type="term" value="F:structural constituent of ribosome"/>
    <property type="evidence" value="ECO:0007669"/>
    <property type="project" value="InterPro"/>
</dbReference>
<dbReference type="GO" id="GO:0006412">
    <property type="term" value="P:translation"/>
    <property type="evidence" value="ECO:0007669"/>
    <property type="project" value="UniProtKB-UniRule"/>
</dbReference>
<dbReference type="CDD" id="cd00473">
    <property type="entry name" value="bS6"/>
    <property type="match status" value="1"/>
</dbReference>
<dbReference type="FunFam" id="3.30.70.60:FF:000002">
    <property type="entry name" value="30S ribosomal protein S6"/>
    <property type="match status" value="1"/>
</dbReference>
<dbReference type="Gene3D" id="3.30.70.60">
    <property type="match status" value="1"/>
</dbReference>
<dbReference type="HAMAP" id="MF_00360">
    <property type="entry name" value="Ribosomal_bS6"/>
    <property type="match status" value="1"/>
</dbReference>
<dbReference type="InterPro" id="IPR000529">
    <property type="entry name" value="Ribosomal_bS6"/>
</dbReference>
<dbReference type="InterPro" id="IPR020815">
    <property type="entry name" value="Ribosomal_bS6_CS"/>
</dbReference>
<dbReference type="InterPro" id="IPR035980">
    <property type="entry name" value="Ribosomal_bS6_sf"/>
</dbReference>
<dbReference type="InterPro" id="IPR020814">
    <property type="entry name" value="Ribosomal_S6_plastid/chlpt"/>
</dbReference>
<dbReference type="InterPro" id="IPR014717">
    <property type="entry name" value="Transl_elong_EF1B/ribsomal_bS6"/>
</dbReference>
<dbReference type="NCBIfam" id="TIGR00166">
    <property type="entry name" value="S6"/>
    <property type="match status" value="1"/>
</dbReference>
<dbReference type="PANTHER" id="PTHR21011">
    <property type="entry name" value="MITOCHONDRIAL 28S RIBOSOMAL PROTEIN S6"/>
    <property type="match status" value="1"/>
</dbReference>
<dbReference type="PANTHER" id="PTHR21011:SF1">
    <property type="entry name" value="SMALL RIBOSOMAL SUBUNIT PROTEIN BS6M"/>
    <property type="match status" value="1"/>
</dbReference>
<dbReference type="Pfam" id="PF01250">
    <property type="entry name" value="Ribosomal_S6"/>
    <property type="match status" value="1"/>
</dbReference>
<dbReference type="SUPFAM" id="SSF54995">
    <property type="entry name" value="Ribosomal protein S6"/>
    <property type="match status" value="1"/>
</dbReference>
<dbReference type="PROSITE" id="PS01048">
    <property type="entry name" value="RIBOSOMAL_S6"/>
    <property type="match status" value="1"/>
</dbReference>